<reference key="1">
    <citation type="journal article" date="2011" name="J. Bacteriol.">
        <title>Comparative genomics of 28 Salmonella enterica isolates: evidence for CRISPR-mediated adaptive sublineage evolution.</title>
        <authorList>
            <person name="Fricke W.F."/>
            <person name="Mammel M.K."/>
            <person name="McDermott P.F."/>
            <person name="Tartera C."/>
            <person name="White D.G."/>
            <person name="Leclerc J.E."/>
            <person name="Ravel J."/>
            <person name="Cebula T.A."/>
        </authorList>
    </citation>
    <scope>NUCLEOTIDE SEQUENCE [LARGE SCALE GENOMIC DNA]</scope>
    <source>
        <strain>SL254</strain>
    </source>
</reference>
<sequence length="344" mass="38278">MRVIRPVEHADIAALMQLAGKTGGGLTSLPANEATLAARIERALKTWSGELPKGEQGYVFVLEDSETGEVGGICAIEVAVGLNDPWYNYRVGTLVHASKELNVYNALPTLFLSNDHTGSSELCTLFLDPEWRKEGNGYLLSKSRFMFMAAFRDKFNEKVVAEMRGVIDEHGYSPFWQSLGKRFFSMDFSRADFLCGTGQKAFIAELMPKHPIYTHFLSEEAQAVIGEVHPQTAPARAVLEKEGFRYRHYIDIFDGGPTLECDIDRVRAIRKSRLVEVAEGQPAPGDYPACLVANENYHHFRAALVRADPQTSRLVLTAAQLDALKCRAGDHVRLVRLCAEEKTV</sequence>
<keyword id="KW-0012">Acyltransferase</keyword>
<keyword id="KW-0056">Arginine metabolism</keyword>
<keyword id="KW-0808">Transferase</keyword>
<proteinExistence type="inferred from homology"/>
<comment type="function">
    <text evidence="1">Catalyzes the transfer of succinyl-CoA to arginine to produce N(2)-succinylarginine.</text>
</comment>
<comment type="catalytic activity">
    <reaction evidence="1">
        <text>succinyl-CoA + L-arginine = N(2)-succinyl-L-arginine + CoA + H(+)</text>
        <dbReference type="Rhea" id="RHEA:15185"/>
        <dbReference type="ChEBI" id="CHEBI:15378"/>
        <dbReference type="ChEBI" id="CHEBI:32682"/>
        <dbReference type="ChEBI" id="CHEBI:57287"/>
        <dbReference type="ChEBI" id="CHEBI:57292"/>
        <dbReference type="ChEBI" id="CHEBI:58241"/>
        <dbReference type="EC" id="2.3.1.109"/>
    </reaction>
</comment>
<comment type="pathway">
    <text evidence="1">Amino-acid degradation; L-arginine degradation via AST pathway; L-glutamate and succinate from L-arginine: step 1/5.</text>
</comment>
<comment type="similarity">
    <text evidence="1">Belongs to the arginine N-succinyltransferase family.</text>
</comment>
<organism>
    <name type="scientific">Salmonella newport (strain SL254)</name>
    <dbReference type="NCBI Taxonomy" id="423368"/>
    <lineage>
        <taxon>Bacteria</taxon>
        <taxon>Pseudomonadati</taxon>
        <taxon>Pseudomonadota</taxon>
        <taxon>Gammaproteobacteria</taxon>
        <taxon>Enterobacterales</taxon>
        <taxon>Enterobacteriaceae</taxon>
        <taxon>Salmonella</taxon>
    </lineage>
</organism>
<feature type="chain" id="PRO_1000137988" description="Arginine N-succinyltransferase">
    <location>
        <begin position="1"/>
        <end position="344"/>
    </location>
</feature>
<feature type="active site" description="Proton donor" evidence="1">
    <location>
        <position position="229"/>
    </location>
</feature>
<feature type="binding site" evidence="1">
    <location>
        <position position="125"/>
    </location>
    <ligand>
        <name>succinyl-CoA</name>
        <dbReference type="ChEBI" id="CHEBI:57292"/>
    </ligand>
</feature>
<dbReference type="EC" id="2.3.1.109" evidence="1"/>
<dbReference type="EMBL" id="CP001113">
    <property type="protein sequence ID" value="ACF63510.1"/>
    <property type="molecule type" value="Genomic_DNA"/>
</dbReference>
<dbReference type="RefSeq" id="WP_001263889.1">
    <property type="nucleotide sequence ID" value="NZ_CCMR01000003.1"/>
</dbReference>
<dbReference type="SMR" id="B4T3Z5"/>
<dbReference type="KEGG" id="see:SNSL254_A1416"/>
<dbReference type="HOGENOM" id="CLU_057655_0_0_6"/>
<dbReference type="UniPathway" id="UPA00185">
    <property type="reaction ID" value="UER00279"/>
</dbReference>
<dbReference type="Proteomes" id="UP000008824">
    <property type="component" value="Chromosome"/>
</dbReference>
<dbReference type="GO" id="GO:0008791">
    <property type="term" value="F:arginine N-succinyltransferase activity"/>
    <property type="evidence" value="ECO:0007669"/>
    <property type="project" value="UniProtKB-UniRule"/>
</dbReference>
<dbReference type="GO" id="GO:0019544">
    <property type="term" value="P:arginine catabolic process to glutamate"/>
    <property type="evidence" value="ECO:0007669"/>
    <property type="project" value="UniProtKB-UniRule"/>
</dbReference>
<dbReference type="GO" id="GO:0019545">
    <property type="term" value="P:arginine catabolic process to succinate"/>
    <property type="evidence" value="ECO:0007669"/>
    <property type="project" value="UniProtKB-UniRule"/>
</dbReference>
<dbReference type="Gene3D" id="2.40.40.20">
    <property type="match status" value="1"/>
</dbReference>
<dbReference type="Gene3D" id="3.40.630.30">
    <property type="match status" value="1"/>
</dbReference>
<dbReference type="HAMAP" id="MF_01171">
    <property type="entry name" value="AstA"/>
    <property type="match status" value="1"/>
</dbReference>
<dbReference type="InterPro" id="IPR016181">
    <property type="entry name" value="Acyl_CoA_acyltransferase"/>
</dbReference>
<dbReference type="InterPro" id="IPR007041">
    <property type="entry name" value="Arg_succinylTrfase_AstA/AruG"/>
</dbReference>
<dbReference type="InterPro" id="IPR017650">
    <property type="entry name" value="Arginine_N-succinylTrfase"/>
</dbReference>
<dbReference type="NCBIfam" id="TIGR03243">
    <property type="entry name" value="arg_catab_AOST"/>
    <property type="match status" value="1"/>
</dbReference>
<dbReference type="NCBIfam" id="TIGR03244">
    <property type="entry name" value="arg_catab_AstA"/>
    <property type="match status" value="1"/>
</dbReference>
<dbReference type="NCBIfam" id="NF007770">
    <property type="entry name" value="PRK10456.1"/>
    <property type="match status" value="1"/>
</dbReference>
<dbReference type="PANTHER" id="PTHR30420:SF1">
    <property type="entry name" value="ARGININE N-SUCCINYLTRANSFERASE"/>
    <property type="match status" value="1"/>
</dbReference>
<dbReference type="PANTHER" id="PTHR30420">
    <property type="entry name" value="N-SUCCINYLARGININE DIHYDROLASE"/>
    <property type="match status" value="1"/>
</dbReference>
<dbReference type="Pfam" id="PF04958">
    <property type="entry name" value="AstA"/>
    <property type="match status" value="1"/>
</dbReference>
<dbReference type="SUPFAM" id="SSF55729">
    <property type="entry name" value="Acyl-CoA N-acyltransferases (Nat)"/>
    <property type="match status" value="1"/>
</dbReference>
<protein>
    <recommendedName>
        <fullName evidence="1">Arginine N-succinyltransferase</fullName>
        <shortName evidence="1">AST</shortName>
        <ecNumber evidence="1">2.3.1.109</ecNumber>
    </recommendedName>
    <alternativeName>
        <fullName evidence="1">AOST</fullName>
    </alternativeName>
</protein>
<gene>
    <name evidence="1" type="primary">astA</name>
    <name type="ordered locus">SNSL254_A1416</name>
</gene>
<evidence type="ECO:0000255" key="1">
    <source>
        <dbReference type="HAMAP-Rule" id="MF_01171"/>
    </source>
</evidence>
<name>ASTA_SALNS</name>
<accession>B4T3Z5</accession>